<evidence type="ECO:0000255" key="1">
    <source>
        <dbReference type="HAMAP-Rule" id="MF_00059"/>
    </source>
</evidence>
<accession>P93974</accession>
<keyword id="KW-0150">Chloroplast</keyword>
<keyword id="KW-0240">DNA-directed RNA polymerase</keyword>
<keyword id="KW-0548">Nucleotidyltransferase</keyword>
<keyword id="KW-0934">Plastid</keyword>
<keyword id="KW-0804">Transcription</keyword>
<keyword id="KW-0808">Transferase</keyword>
<protein>
    <recommendedName>
        <fullName evidence="1">DNA-directed RNA polymerase subunit alpha</fullName>
        <shortName evidence="1">PEP</shortName>
        <ecNumber evidence="1">2.7.7.6</ecNumber>
    </recommendedName>
    <alternativeName>
        <fullName evidence="1">Plastid-encoded RNA polymerase subunit alpha</fullName>
        <shortName evidence="1">RNA polymerase subunit alpha</shortName>
    </alternativeName>
</protein>
<geneLocation type="chloroplast"/>
<feature type="chain" id="PRO_0000175455" description="DNA-directed RNA polymerase subunit alpha">
    <location>
        <begin position="1"/>
        <end position="339"/>
    </location>
</feature>
<feature type="region of interest" description="Alpha N-terminal domain (alpha-NTD)" evidence="1">
    <location>
        <begin position="1"/>
        <end position="233"/>
    </location>
</feature>
<feature type="region of interest" description="Alpha C-terminal domain (alpha-CTD)" evidence="1">
    <location>
        <begin position="264"/>
        <end position="339"/>
    </location>
</feature>
<gene>
    <name evidence="1" type="primary">rpoA</name>
</gene>
<name>RPOA_EREDI</name>
<proteinExistence type="inferred from homology"/>
<sequence length="339" mass="38899">MVREEVAGSTQTLQWKCVESRVDSKRLYYGRFILSPLRKGQADTVGIALRRALLGEIEGTCITRAKFGSVPHEYSTIAGIEESVQEILLNLKEIVLRSNLYGVRDASICVKGPRYITAQDIILPPSVEIVDTAQPIANLTEPIDFCIDLQIKRDRGYQTELRKNYQDGSYPIDAVSMPVRNVNYSIFSCGNGNEKHEILFLEIWTNGSLTPKEALYEASRNLIDLFLPFLHAEEEGTSFEENKNRFTPPLFTFKKRLTNLKKNKKGIPLNCIFIDQLELTSRTYNCLKRANIHTLLDLLSKTEEDLLRIDSFRMEDRKHIWDTLEKHLPIDLLKNKLSF</sequence>
<dbReference type="EC" id="2.7.7.6" evidence="1"/>
<dbReference type="EMBL" id="Z77745">
    <property type="protein sequence ID" value="CAB01312.1"/>
    <property type="molecule type" value="Genomic_DNA"/>
</dbReference>
<dbReference type="SMR" id="P93974"/>
<dbReference type="GO" id="GO:0009507">
    <property type="term" value="C:chloroplast"/>
    <property type="evidence" value="ECO:0007669"/>
    <property type="project" value="UniProtKB-SubCell"/>
</dbReference>
<dbReference type="GO" id="GO:0000428">
    <property type="term" value="C:DNA-directed RNA polymerase complex"/>
    <property type="evidence" value="ECO:0007669"/>
    <property type="project" value="UniProtKB-KW"/>
</dbReference>
<dbReference type="GO" id="GO:0005739">
    <property type="term" value="C:mitochondrion"/>
    <property type="evidence" value="ECO:0007669"/>
    <property type="project" value="GOC"/>
</dbReference>
<dbReference type="GO" id="GO:0003677">
    <property type="term" value="F:DNA binding"/>
    <property type="evidence" value="ECO:0007669"/>
    <property type="project" value="UniProtKB-UniRule"/>
</dbReference>
<dbReference type="GO" id="GO:0003899">
    <property type="term" value="F:DNA-directed RNA polymerase activity"/>
    <property type="evidence" value="ECO:0007669"/>
    <property type="project" value="UniProtKB-UniRule"/>
</dbReference>
<dbReference type="GO" id="GO:0046983">
    <property type="term" value="F:protein dimerization activity"/>
    <property type="evidence" value="ECO:0007669"/>
    <property type="project" value="InterPro"/>
</dbReference>
<dbReference type="GO" id="GO:0006351">
    <property type="term" value="P:DNA-templated transcription"/>
    <property type="evidence" value="ECO:0007669"/>
    <property type="project" value="UniProtKB-UniRule"/>
</dbReference>
<dbReference type="CDD" id="cd06928">
    <property type="entry name" value="RNAP_alpha_NTD"/>
    <property type="match status" value="1"/>
</dbReference>
<dbReference type="FunFam" id="2.170.120.12:FF:000001">
    <property type="entry name" value="DNA-directed RNA polymerase subunit alpha"/>
    <property type="match status" value="1"/>
</dbReference>
<dbReference type="Gene3D" id="1.10.150.20">
    <property type="entry name" value="5' to 3' exonuclease, C-terminal subdomain"/>
    <property type="match status" value="1"/>
</dbReference>
<dbReference type="Gene3D" id="2.170.120.12">
    <property type="entry name" value="DNA-directed RNA polymerase, insert domain"/>
    <property type="match status" value="1"/>
</dbReference>
<dbReference type="Gene3D" id="3.30.1360.10">
    <property type="entry name" value="RNA polymerase, RBP11-like subunit"/>
    <property type="match status" value="1"/>
</dbReference>
<dbReference type="HAMAP" id="MF_00059">
    <property type="entry name" value="RNApol_bact_RpoA"/>
    <property type="match status" value="1"/>
</dbReference>
<dbReference type="InterPro" id="IPR011262">
    <property type="entry name" value="DNA-dir_RNA_pol_insert"/>
</dbReference>
<dbReference type="InterPro" id="IPR011263">
    <property type="entry name" value="DNA-dir_RNA_pol_RpoA/D/Rpb3"/>
</dbReference>
<dbReference type="InterPro" id="IPR011773">
    <property type="entry name" value="DNA-dir_RpoA"/>
</dbReference>
<dbReference type="InterPro" id="IPR036603">
    <property type="entry name" value="RBP11-like"/>
</dbReference>
<dbReference type="InterPro" id="IPR011260">
    <property type="entry name" value="RNAP_asu_C"/>
</dbReference>
<dbReference type="InterPro" id="IPR036643">
    <property type="entry name" value="RNApol_insert_sf"/>
</dbReference>
<dbReference type="NCBIfam" id="TIGR02027">
    <property type="entry name" value="rpoA"/>
    <property type="match status" value="1"/>
</dbReference>
<dbReference type="Pfam" id="PF01000">
    <property type="entry name" value="RNA_pol_A_bac"/>
    <property type="match status" value="1"/>
</dbReference>
<dbReference type="Pfam" id="PF03118">
    <property type="entry name" value="RNA_pol_A_CTD"/>
    <property type="match status" value="1"/>
</dbReference>
<dbReference type="Pfam" id="PF01193">
    <property type="entry name" value="RNA_pol_L"/>
    <property type="match status" value="1"/>
</dbReference>
<dbReference type="SMART" id="SM00662">
    <property type="entry name" value="RPOLD"/>
    <property type="match status" value="1"/>
</dbReference>
<dbReference type="SUPFAM" id="SSF47789">
    <property type="entry name" value="C-terminal domain of RNA polymerase alpha subunit"/>
    <property type="match status" value="1"/>
</dbReference>
<dbReference type="SUPFAM" id="SSF56553">
    <property type="entry name" value="Insert subdomain of RNA polymerase alpha subunit"/>
    <property type="match status" value="1"/>
</dbReference>
<dbReference type="SUPFAM" id="SSF55257">
    <property type="entry name" value="RBP11-like subunits of RNA polymerase"/>
    <property type="match status" value="1"/>
</dbReference>
<reference key="1">
    <citation type="journal article" date="1997" name="Mol. Phylogenet. Evol.">
        <title>Phylogenetic analysis of the Triticeae (Poaceae) based on rpoA sequence data.</title>
        <authorList>
            <person name="Petersen G."/>
            <person name="Seberg O."/>
        </authorList>
    </citation>
    <scope>NUCLEOTIDE SEQUENCE [GENOMIC DNA]</scope>
    <source>
        <strain>H5552</strain>
        <tissue>Leaf</tissue>
    </source>
</reference>
<organism>
    <name type="scientific">Eremopyrum distans</name>
    <dbReference type="NCBI Taxonomy" id="58936"/>
    <lineage>
        <taxon>Eukaryota</taxon>
        <taxon>Viridiplantae</taxon>
        <taxon>Streptophyta</taxon>
        <taxon>Embryophyta</taxon>
        <taxon>Tracheophyta</taxon>
        <taxon>Spermatophyta</taxon>
        <taxon>Magnoliopsida</taxon>
        <taxon>Liliopsida</taxon>
        <taxon>Poales</taxon>
        <taxon>Poaceae</taxon>
        <taxon>BOP clade</taxon>
        <taxon>Pooideae</taxon>
        <taxon>Triticodae</taxon>
        <taxon>Triticeae</taxon>
        <taxon>Hordeinae</taxon>
        <taxon>Eremopyrum</taxon>
    </lineage>
</organism>
<comment type="function">
    <text evidence="1">DNA-dependent RNA polymerase catalyzes the transcription of DNA into RNA using the four ribonucleoside triphosphates as substrates.</text>
</comment>
<comment type="catalytic activity">
    <reaction evidence="1">
        <text>RNA(n) + a ribonucleoside 5'-triphosphate = RNA(n+1) + diphosphate</text>
        <dbReference type="Rhea" id="RHEA:21248"/>
        <dbReference type="Rhea" id="RHEA-COMP:14527"/>
        <dbReference type="Rhea" id="RHEA-COMP:17342"/>
        <dbReference type="ChEBI" id="CHEBI:33019"/>
        <dbReference type="ChEBI" id="CHEBI:61557"/>
        <dbReference type="ChEBI" id="CHEBI:140395"/>
        <dbReference type="EC" id="2.7.7.6"/>
    </reaction>
</comment>
<comment type="subunit">
    <text evidence="1">In plastids the minimal PEP RNA polymerase catalytic core is composed of four subunits: alpha, beta, beta', and beta''. When a (nuclear-encoded) sigma factor is associated with the core the holoenzyme is formed, which can initiate transcription.</text>
</comment>
<comment type="subcellular location">
    <subcellularLocation>
        <location>Plastid</location>
        <location>Chloroplast</location>
    </subcellularLocation>
</comment>
<comment type="domain">
    <text evidence="1">The N-terminal domain is essential for RNAP assembly and basal transcription, whereas the C-terminal domain is involved in interaction with transcriptional regulators and with upstream promoter elements.</text>
</comment>
<comment type="similarity">
    <text evidence="1">Belongs to the RNA polymerase alpha chain family.</text>
</comment>